<keyword id="KW-0378">Hydrolase</keyword>
<keyword id="KW-0904">Protein phosphatase</keyword>
<keyword id="KW-1185">Reference proteome</keyword>
<evidence type="ECO:0000255" key="1">
    <source>
        <dbReference type="PROSITE-ProRule" id="PRU00589"/>
    </source>
</evidence>
<evidence type="ECO:0000255" key="2">
    <source>
        <dbReference type="PROSITE-ProRule" id="PRU00590"/>
    </source>
</evidence>
<evidence type="ECO:0000255" key="3">
    <source>
        <dbReference type="PROSITE-ProRule" id="PRU00774"/>
    </source>
</evidence>
<evidence type="ECO:0000256" key="4">
    <source>
        <dbReference type="SAM" id="MobiDB-lite"/>
    </source>
</evidence>
<evidence type="ECO:0000305" key="5"/>
<accession>Q9SK28</accession>
<accession>A0A2H1ZE40</accession>
<gene>
    <name type="primary">FH18</name>
    <name type="ordered locus">At2g25050</name>
    <name type="ORF">F27C12.3</name>
</gene>
<sequence>MALFRKFFHRKPPEGLLEISERVYVFDCCLTTDMLEDEDYRVYVSRIMSQLREQFPGASFMVFNFRDGDSRSRMESVLTEYDMTIMDYPRHYEGCPLLTMETVHHFLKSAESWLLLSQQNILLSHCELGGWPTLAFMLASLLLYRKQFSGEHRTLEMIYKQAPRELLQLMSPLNPLPSQLRFLQYISRRNVGSQWPPLDQALTLDCVNLRLIPDFDGEGGCRPIFRIYGQDPFMASDRTSKVLFSMPKRSKAVRQYKQADCELVKIDINCHILGDVVLECITLGSDLEREEMMFRVVFNTAFLRSNILTLNRGEIDVLWNTTDRFPKDFSAEVIFSEMGAGKKLASVDLPHMEEKDVLPMEAFAKVQEIFSEAEWLDPNSDVAVTVFNQITAANILQESLDSGSPRSPDSRSLLESALEKVKEKTKLMISENIVSSPDTSSPEKEKDTMSSHKSYADPNSILKKVDESRGLRVSVQRNVHSKIFSPRMVQSPVTSPLPNRSPTQGSPASISRFHSSPSSLGITSILHDHGSCKDEESTSSSPASPSISFLPTLHPLTSSQPKKASPQCPQSPTPVHSNGPPSAEAAVTSSPLPPLKPLRILSRPPPPPPPPPISSLRSTPSPSSTSNSIATQGPPPPPPPPPLQSHRSALSSSPLPPPLPPKKLLATTNPPPPPPPPLHSNSRMGAPTSSLVLKSPPVPPPPAPAPLSRSHNGNIPPVPGPPLGLKGRGILQNLKGQGQTRKANLKPYHWLKLTRAVQGSLWAEAQKSDEAATAPDFDISELEKLFSAVNLSSDSENNGGKSGRRARPKVEKVQLIELRRAYNCEIMLSKVKIPLPDLMSSVLALDESVIDVDQVDNLIKFCPTKEEAELLKGFTGNKETLGRCEQFFLELLKVPRVETKLRVFSFKIQFHSQVTDLRRGLNTIHSAANEVRGSAKLKRIMQTILSLGNALNHGTARGSAIGFRLDSLLKLTDTRSRNSKMTLMHYLCKVLAEKLPELLNFPKDLVSLEAATKIQLKYLAEEMQAISKGLEKVVQEFTASETDGQISKHFRMNLKEFLSVAEGEVRSLASLYSTVGGSADALALYFGEDPARVPFEQVVSTLQNFVRIFVRSHEENCKQVEFEKKRAQKEAENEKLKKGVYNEN</sequence>
<feature type="chain" id="PRO_0000308544" description="Formin-like protein 18">
    <location>
        <begin position="1"/>
        <end position="1144"/>
    </location>
</feature>
<feature type="domain" description="Phosphatase tensin-type" evidence="2">
    <location>
        <begin position="17"/>
        <end position="193"/>
    </location>
</feature>
<feature type="domain" description="C2 tensin-type" evidence="1">
    <location>
        <begin position="199"/>
        <end position="338"/>
    </location>
</feature>
<feature type="domain" description="FH2" evidence="3">
    <location>
        <begin position="735"/>
        <end position="1135"/>
    </location>
</feature>
<feature type="region of interest" description="Disordered" evidence="4">
    <location>
        <begin position="429"/>
        <end position="463"/>
    </location>
</feature>
<feature type="region of interest" description="Disordered" evidence="4">
    <location>
        <begin position="482"/>
        <end position="729"/>
    </location>
</feature>
<feature type="compositionally biased region" description="Basic and acidic residues" evidence="4">
    <location>
        <begin position="441"/>
        <end position="450"/>
    </location>
</feature>
<feature type="compositionally biased region" description="Polar residues" evidence="4">
    <location>
        <begin position="491"/>
        <end position="522"/>
    </location>
</feature>
<feature type="compositionally biased region" description="Basic and acidic residues" evidence="4">
    <location>
        <begin position="526"/>
        <end position="536"/>
    </location>
</feature>
<feature type="compositionally biased region" description="Low complexity" evidence="4">
    <location>
        <begin position="538"/>
        <end position="548"/>
    </location>
</feature>
<feature type="compositionally biased region" description="Polar residues" evidence="4">
    <location>
        <begin position="555"/>
        <end position="580"/>
    </location>
</feature>
<feature type="compositionally biased region" description="Pro residues" evidence="4">
    <location>
        <begin position="603"/>
        <end position="613"/>
    </location>
</feature>
<feature type="compositionally biased region" description="Low complexity" evidence="4">
    <location>
        <begin position="614"/>
        <end position="629"/>
    </location>
</feature>
<feature type="compositionally biased region" description="Pro residues" evidence="4">
    <location>
        <begin position="633"/>
        <end position="643"/>
    </location>
</feature>
<feature type="compositionally biased region" description="Low complexity" evidence="4">
    <location>
        <begin position="644"/>
        <end position="653"/>
    </location>
</feature>
<feature type="compositionally biased region" description="Pro residues" evidence="4">
    <location>
        <begin position="669"/>
        <end position="678"/>
    </location>
</feature>
<feature type="compositionally biased region" description="Low complexity" evidence="4">
    <location>
        <begin position="679"/>
        <end position="695"/>
    </location>
</feature>
<feature type="compositionally biased region" description="Pro residues" evidence="4">
    <location>
        <begin position="696"/>
        <end position="705"/>
    </location>
</feature>
<feature type="active site" description="Phosphocysteine intermediate" evidence="2">
    <location>
        <position position="126"/>
    </location>
</feature>
<organism>
    <name type="scientific">Arabidopsis thaliana</name>
    <name type="common">Mouse-ear cress</name>
    <dbReference type="NCBI Taxonomy" id="3702"/>
    <lineage>
        <taxon>Eukaryota</taxon>
        <taxon>Viridiplantae</taxon>
        <taxon>Streptophyta</taxon>
        <taxon>Embryophyta</taxon>
        <taxon>Tracheophyta</taxon>
        <taxon>Spermatophyta</taxon>
        <taxon>Magnoliopsida</taxon>
        <taxon>eudicotyledons</taxon>
        <taxon>Gunneridae</taxon>
        <taxon>Pentapetalae</taxon>
        <taxon>rosids</taxon>
        <taxon>malvids</taxon>
        <taxon>Brassicales</taxon>
        <taxon>Brassicaceae</taxon>
        <taxon>Camelineae</taxon>
        <taxon>Arabidopsis</taxon>
    </lineage>
</organism>
<protein>
    <recommendedName>
        <fullName>Formin-like protein 18</fullName>
        <shortName>AtFH18</shortName>
    </recommendedName>
</protein>
<comment type="similarity">
    <text evidence="5">Belongs to the formin-like family. Class-II subfamily.</text>
</comment>
<comment type="sequence caution" evidence="5">
    <conflict type="erroneous gene model prediction">
        <sequence resource="EMBL-CDS" id="AAD23008"/>
    </conflict>
</comment>
<comment type="sequence caution" evidence="5">
    <conflict type="erroneous gene model prediction">
        <sequence resource="EMBL-CDS" id="AEC07650"/>
    </conflict>
</comment>
<name>FH18_ARATH</name>
<dbReference type="EMBL" id="AC006585">
    <property type="protein sequence ID" value="AAD23008.1"/>
    <property type="status" value="ALT_SEQ"/>
    <property type="molecule type" value="Genomic_DNA"/>
</dbReference>
<dbReference type="EMBL" id="CP002685">
    <property type="protein sequence ID" value="AEC07650.2"/>
    <property type="status" value="ALT_SEQ"/>
    <property type="molecule type" value="Genomic_DNA"/>
</dbReference>
<dbReference type="PIR" id="F84643">
    <property type="entry name" value="F84643"/>
</dbReference>
<dbReference type="RefSeq" id="NP_001318287.1">
    <property type="nucleotide sequence ID" value="NM_001335971.1"/>
</dbReference>
<dbReference type="SMR" id="Q9SK28"/>
<dbReference type="STRING" id="3702.Q9SK28"/>
<dbReference type="GlyGen" id="Q9SK28">
    <property type="glycosylation" value="1 site"/>
</dbReference>
<dbReference type="PaxDb" id="3702-AT2G25050.2"/>
<dbReference type="ProteomicsDB" id="230509"/>
<dbReference type="GeneID" id="817043"/>
<dbReference type="KEGG" id="ath:AT2G25050"/>
<dbReference type="Araport" id="AT2G25050"/>
<dbReference type="TAIR" id="AT2G25050"/>
<dbReference type="eggNOG" id="KOG1922">
    <property type="taxonomic scope" value="Eukaryota"/>
</dbReference>
<dbReference type="InParanoid" id="Q9SK28"/>
<dbReference type="PhylomeDB" id="Q9SK28"/>
<dbReference type="PRO" id="PR:Q9SK28"/>
<dbReference type="Proteomes" id="UP000006548">
    <property type="component" value="Chromosome 2"/>
</dbReference>
<dbReference type="ExpressionAtlas" id="Q9SK28">
    <property type="expression patterns" value="baseline and differential"/>
</dbReference>
<dbReference type="GO" id="GO:0004721">
    <property type="term" value="F:phosphoprotein phosphatase activity"/>
    <property type="evidence" value="ECO:0007669"/>
    <property type="project" value="UniProtKB-KW"/>
</dbReference>
<dbReference type="Gene3D" id="2.60.40.1110">
    <property type="match status" value="1"/>
</dbReference>
<dbReference type="Gene3D" id="1.20.58.2220">
    <property type="entry name" value="Formin, FH2 domain"/>
    <property type="match status" value="1"/>
</dbReference>
<dbReference type="Gene3D" id="3.90.190.10">
    <property type="entry name" value="Protein tyrosine phosphatase superfamily"/>
    <property type="match status" value="1"/>
</dbReference>
<dbReference type="InterPro" id="IPR035892">
    <property type="entry name" value="C2_domain_sf"/>
</dbReference>
<dbReference type="InterPro" id="IPR015425">
    <property type="entry name" value="FH2_Formin"/>
</dbReference>
<dbReference type="InterPro" id="IPR042201">
    <property type="entry name" value="FH2_Formin_sf"/>
</dbReference>
<dbReference type="InterPro" id="IPR051144">
    <property type="entry name" value="Formin_homology_domain"/>
</dbReference>
<dbReference type="InterPro" id="IPR029021">
    <property type="entry name" value="Prot-tyrosine_phosphatase-like"/>
</dbReference>
<dbReference type="InterPro" id="IPR014020">
    <property type="entry name" value="Tensin_C2-dom"/>
</dbReference>
<dbReference type="PANTHER" id="PTHR45733">
    <property type="entry name" value="FORMIN-J"/>
    <property type="match status" value="1"/>
</dbReference>
<dbReference type="PANTHER" id="PTHR45733:SF8">
    <property type="entry name" value="FORMIN-J"/>
    <property type="match status" value="1"/>
</dbReference>
<dbReference type="Pfam" id="PF02181">
    <property type="entry name" value="FH2"/>
    <property type="match status" value="1"/>
</dbReference>
<dbReference type="Pfam" id="PF10409">
    <property type="entry name" value="PTEN_C2"/>
    <property type="match status" value="1"/>
</dbReference>
<dbReference type="SMART" id="SM00498">
    <property type="entry name" value="FH2"/>
    <property type="match status" value="1"/>
</dbReference>
<dbReference type="SMART" id="SM01326">
    <property type="entry name" value="PTEN_C2"/>
    <property type="match status" value="1"/>
</dbReference>
<dbReference type="SUPFAM" id="SSF52799">
    <property type="entry name" value="(Phosphotyrosine protein) phosphatases II"/>
    <property type="match status" value="1"/>
</dbReference>
<dbReference type="SUPFAM" id="SSF49562">
    <property type="entry name" value="C2 domain (Calcium/lipid-binding domain, CaLB)"/>
    <property type="match status" value="1"/>
</dbReference>
<dbReference type="SUPFAM" id="SSF101447">
    <property type="entry name" value="Formin homology 2 domain (FH2 domain)"/>
    <property type="match status" value="1"/>
</dbReference>
<dbReference type="PROSITE" id="PS51182">
    <property type="entry name" value="C2_TENSIN"/>
    <property type="match status" value="1"/>
</dbReference>
<dbReference type="PROSITE" id="PS51444">
    <property type="entry name" value="FH2"/>
    <property type="match status" value="1"/>
</dbReference>
<dbReference type="PROSITE" id="PS51181">
    <property type="entry name" value="PPASE_TENSIN"/>
    <property type="match status" value="1"/>
</dbReference>
<proteinExistence type="evidence at transcript level"/>
<reference key="1">
    <citation type="journal article" date="1999" name="Nature">
        <title>Sequence and analysis of chromosome 2 of the plant Arabidopsis thaliana.</title>
        <authorList>
            <person name="Lin X."/>
            <person name="Kaul S."/>
            <person name="Rounsley S.D."/>
            <person name="Shea T.P."/>
            <person name="Benito M.-I."/>
            <person name="Town C.D."/>
            <person name="Fujii C.Y."/>
            <person name="Mason T.M."/>
            <person name="Bowman C.L."/>
            <person name="Barnstead M.E."/>
            <person name="Feldblyum T.V."/>
            <person name="Buell C.R."/>
            <person name="Ketchum K.A."/>
            <person name="Lee J.J."/>
            <person name="Ronning C.M."/>
            <person name="Koo H.L."/>
            <person name="Moffat K.S."/>
            <person name="Cronin L.A."/>
            <person name="Shen M."/>
            <person name="Pai G."/>
            <person name="Van Aken S."/>
            <person name="Umayam L."/>
            <person name="Tallon L.J."/>
            <person name="Gill J.E."/>
            <person name="Adams M.D."/>
            <person name="Carrera A.J."/>
            <person name="Creasy T.H."/>
            <person name="Goodman H.M."/>
            <person name="Somerville C.R."/>
            <person name="Copenhaver G.P."/>
            <person name="Preuss D."/>
            <person name="Nierman W.C."/>
            <person name="White O."/>
            <person name="Eisen J.A."/>
            <person name="Salzberg S.L."/>
            <person name="Fraser C.M."/>
            <person name="Venter J.C."/>
        </authorList>
    </citation>
    <scope>NUCLEOTIDE SEQUENCE [LARGE SCALE GENOMIC DNA]</scope>
    <source>
        <strain>cv. Columbia</strain>
    </source>
</reference>
<reference key="2">
    <citation type="journal article" date="2017" name="Plant J.">
        <title>Araport11: a complete reannotation of the Arabidopsis thaliana reference genome.</title>
        <authorList>
            <person name="Cheng C.Y."/>
            <person name="Krishnakumar V."/>
            <person name="Chan A.P."/>
            <person name="Thibaud-Nissen F."/>
            <person name="Schobel S."/>
            <person name="Town C.D."/>
        </authorList>
    </citation>
    <scope>GENOME REANNOTATION</scope>
    <source>
        <strain>cv. Columbia</strain>
    </source>
</reference>
<reference key="3">
    <citation type="journal article" date="2002" name="Trends Plant Sci.">
        <title>Formins: intermediates in signal-transduction cascades that affect cytoskeletal reorganization.</title>
        <authorList>
            <person name="Deeks M.J."/>
            <person name="Hussey P.J."/>
            <person name="Davies B."/>
        </authorList>
    </citation>
    <scope>GENE FAMILY ORGANIZATION</scope>
    <scope>NOMENCLATURE</scope>
</reference>
<reference key="4">
    <citation type="journal article" date="2004" name="BMC Genomics">
        <title>Formin homology 2 domains occur in multiple contexts in angiosperms.</title>
        <authorList>
            <person name="Cvrckova F."/>
            <person name="Novotny M."/>
            <person name="Pickova D."/>
            <person name="Zarsky V."/>
        </authorList>
    </citation>
    <scope>GENE FAMILY ORGANIZATION</scope>
    <scope>NOMENCLATURE</scope>
</reference>